<keyword id="KW-0053">Apoptosis</keyword>
<keyword id="KW-0378">Hydrolase</keyword>
<keyword id="KW-0645">Protease</keyword>
<keyword id="KW-1185">Reference proteome</keyword>
<keyword id="KW-0788">Thiol protease</keyword>
<keyword id="KW-0865">Zymogen</keyword>
<gene>
    <name type="primary">casA</name>
    <name type="ORF">An18g05760</name>
</gene>
<reference key="1">
    <citation type="journal article" date="2007" name="Nat. Biotechnol.">
        <title>Genome sequencing and analysis of the versatile cell factory Aspergillus niger CBS 513.88.</title>
        <authorList>
            <person name="Pel H.J."/>
            <person name="de Winde J.H."/>
            <person name="Archer D.B."/>
            <person name="Dyer P.S."/>
            <person name="Hofmann G."/>
            <person name="Schaap P.J."/>
            <person name="Turner G."/>
            <person name="de Vries R.P."/>
            <person name="Albang R."/>
            <person name="Albermann K."/>
            <person name="Andersen M.R."/>
            <person name="Bendtsen J.D."/>
            <person name="Benen J.A.E."/>
            <person name="van den Berg M."/>
            <person name="Breestraat S."/>
            <person name="Caddick M.X."/>
            <person name="Contreras R."/>
            <person name="Cornell M."/>
            <person name="Coutinho P.M."/>
            <person name="Danchin E.G.J."/>
            <person name="Debets A.J.M."/>
            <person name="Dekker P."/>
            <person name="van Dijck P.W.M."/>
            <person name="van Dijk A."/>
            <person name="Dijkhuizen L."/>
            <person name="Driessen A.J.M."/>
            <person name="d'Enfert C."/>
            <person name="Geysens S."/>
            <person name="Goosen C."/>
            <person name="Groot G.S.P."/>
            <person name="de Groot P.W.J."/>
            <person name="Guillemette T."/>
            <person name="Henrissat B."/>
            <person name="Herweijer M."/>
            <person name="van den Hombergh J.P.T.W."/>
            <person name="van den Hondel C.A.M.J.J."/>
            <person name="van der Heijden R.T.J.M."/>
            <person name="van der Kaaij R.M."/>
            <person name="Klis F.M."/>
            <person name="Kools H.J."/>
            <person name="Kubicek C.P."/>
            <person name="van Kuyk P.A."/>
            <person name="Lauber J."/>
            <person name="Lu X."/>
            <person name="van der Maarel M.J.E.C."/>
            <person name="Meulenberg R."/>
            <person name="Menke H."/>
            <person name="Mortimer M.A."/>
            <person name="Nielsen J."/>
            <person name="Oliver S.G."/>
            <person name="Olsthoorn M."/>
            <person name="Pal K."/>
            <person name="van Peij N.N.M.E."/>
            <person name="Ram A.F.J."/>
            <person name="Rinas U."/>
            <person name="Roubos J.A."/>
            <person name="Sagt C.M.J."/>
            <person name="Schmoll M."/>
            <person name="Sun J."/>
            <person name="Ussery D."/>
            <person name="Varga J."/>
            <person name="Vervecken W."/>
            <person name="van de Vondervoort P.J.J."/>
            <person name="Wedler H."/>
            <person name="Woesten H.A.B."/>
            <person name="Zeng A.-P."/>
            <person name="van Ooyen A.J.J."/>
            <person name="Visser J."/>
            <person name="Stam H."/>
        </authorList>
    </citation>
    <scope>NUCLEOTIDE SEQUENCE [LARGE SCALE GENOMIC DNA]</scope>
    <source>
        <strain>ATCC MYA-4892 / CBS 513.88 / FGSC A1513</strain>
    </source>
</reference>
<feature type="propeptide" id="PRO_0000333624" evidence="2">
    <location>
        <begin position="1"/>
        <end status="unknown"/>
    </location>
</feature>
<feature type="chain" id="PRO_0000333625" description="Metacaspase-1A">
    <location>
        <begin status="unknown"/>
        <end position="404"/>
    </location>
</feature>
<feature type="region of interest" description="Disordered" evidence="3">
    <location>
        <begin position="1"/>
        <end position="100"/>
    </location>
</feature>
<feature type="compositionally biased region" description="Basic residues" evidence="3">
    <location>
        <begin position="1"/>
        <end position="10"/>
    </location>
</feature>
<feature type="compositionally biased region" description="Low complexity" evidence="3">
    <location>
        <begin position="24"/>
        <end position="51"/>
    </location>
</feature>
<feature type="active site" evidence="1">
    <location>
        <position position="200"/>
    </location>
</feature>
<feature type="active site" evidence="1">
    <location>
        <position position="256"/>
    </location>
</feature>
<dbReference type="EC" id="3.4.22.-"/>
<dbReference type="EMBL" id="AM270409">
    <property type="protein sequence ID" value="CAK97495.1"/>
    <property type="status" value="ALT_INIT"/>
    <property type="molecule type" value="Genomic_DNA"/>
</dbReference>
<dbReference type="SMR" id="A2RB75"/>
<dbReference type="MEROPS" id="C14.035"/>
<dbReference type="EnsemblFungi" id="CAK97495">
    <property type="protein sequence ID" value="CAK97495"/>
    <property type="gene ID" value="An18g05760"/>
</dbReference>
<dbReference type="Proteomes" id="UP000006706">
    <property type="component" value="Chromosome 8L"/>
</dbReference>
<dbReference type="GO" id="GO:0005737">
    <property type="term" value="C:cytoplasm"/>
    <property type="evidence" value="ECO:0007669"/>
    <property type="project" value="TreeGrafter"/>
</dbReference>
<dbReference type="GO" id="GO:0004197">
    <property type="term" value="F:cysteine-type endopeptidase activity"/>
    <property type="evidence" value="ECO:0007669"/>
    <property type="project" value="InterPro"/>
</dbReference>
<dbReference type="GO" id="GO:0006915">
    <property type="term" value="P:apoptotic process"/>
    <property type="evidence" value="ECO:0007669"/>
    <property type="project" value="UniProtKB-KW"/>
</dbReference>
<dbReference type="GO" id="GO:0006508">
    <property type="term" value="P:proteolysis"/>
    <property type="evidence" value="ECO:0007669"/>
    <property type="project" value="UniProtKB-KW"/>
</dbReference>
<dbReference type="Gene3D" id="3.40.50.12660">
    <property type="match status" value="1"/>
</dbReference>
<dbReference type="InterPro" id="IPR029030">
    <property type="entry name" value="Caspase-like_dom_sf"/>
</dbReference>
<dbReference type="InterPro" id="IPR050452">
    <property type="entry name" value="Metacaspase"/>
</dbReference>
<dbReference type="InterPro" id="IPR011600">
    <property type="entry name" value="Pept_C14_caspase"/>
</dbReference>
<dbReference type="PANTHER" id="PTHR48104:SF30">
    <property type="entry name" value="METACASPASE-1"/>
    <property type="match status" value="1"/>
</dbReference>
<dbReference type="PANTHER" id="PTHR48104">
    <property type="entry name" value="METACASPASE-4"/>
    <property type="match status" value="1"/>
</dbReference>
<dbReference type="Pfam" id="PF00656">
    <property type="entry name" value="Peptidase_C14"/>
    <property type="match status" value="1"/>
</dbReference>
<dbReference type="SUPFAM" id="SSF52129">
    <property type="entry name" value="Caspase-like"/>
    <property type="match status" value="1"/>
</dbReference>
<protein>
    <recommendedName>
        <fullName>Metacaspase-1A</fullName>
        <ecNumber>3.4.22.-</ecNumber>
    </recommendedName>
</protein>
<proteinExistence type="inferred from homology"/>
<accession>A2RB75</accession>
<evidence type="ECO:0000250" key="1"/>
<evidence type="ECO:0000255" key="2"/>
<evidence type="ECO:0000256" key="3">
    <source>
        <dbReference type="SAM" id="MobiDB-lite"/>
    </source>
</evidence>
<evidence type="ECO:0000305" key="4"/>
<sequence length="404" mass="44268">MNPHHSHHHSSYGGGGYPGQAYRQQQPPSNPYQYNQPSPQPYQGSQPPQNGYNGGYPAASQGPMYGGRPGIADVYHNSYNQGNHSAPAPPPSDPVSFGQGAPQGYNFQYSRCTGKRKALLIGINYFNQKGQLRGCINDVKNMSTYLNQNFGYAREDMVVLTDDQQNPMSQPTKANILRAMHWLVKDAQPNDSLFFHYSGHGGQTPDLDGDEDDGYDEVIYPVDFRAAGHIVDDEMHRIMVKPLQPGVRLTAIFDSCHSGSALDLPYIYSTQGILKEPNLAKEAGQGLLGVVSAYARGDMSSMMSTAVGFFKKATKGDEAYERTIQTKTSPADVVMWSGSKDDQTSQDAQIAGQATGAMSWAFISALRKNPQQSYVQLLNSIRDELSAKYTQKPQLSCSHPLVAL</sequence>
<organism>
    <name type="scientific">Aspergillus niger (strain ATCC MYA-4892 / CBS 513.88 / FGSC A1513)</name>
    <dbReference type="NCBI Taxonomy" id="425011"/>
    <lineage>
        <taxon>Eukaryota</taxon>
        <taxon>Fungi</taxon>
        <taxon>Dikarya</taxon>
        <taxon>Ascomycota</taxon>
        <taxon>Pezizomycotina</taxon>
        <taxon>Eurotiomycetes</taxon>
        <taxon>Eurotiomycetidae</taxon>
        <taxon>Eurotiales</taxon>
        <taxon>Aspergillaceae</taxon>
        <taxon>Aspergillus</taxon>
        <taxon>Aspergillus subgen. Circumdati</taxon>
    </lineage>
</organism>
<comment type="function">
    <text evidence="1">Involved in cell death (apoptosis).</text>
</comment>
<comment type="similarity">
    <text evidence="4">Belongs to the peptidase C14B family.</text>
</comment>
<comment type="sequence caution" evidence="4">
    <conflict type="erroneous initiation">
        <sequence resource="EMBL-CDS" id="CAK97495"/>
    </conflict>
</comment>
<name>MCA1A_ASPNC</name>